<reference key="1">
    <citation type="journal article" date="2004" name="Science">
        <title>The Ashbya gossypii genome as a tool for mapping the ancient Saccharomyces cerevisiae genome.</title>
        <authorList>
            <person name="Dietrich F.S."/>
            <person name="Voegeli S."/>
            <person name="Brachat S."/>
            <person name="Lerch A."/>
            <person name="Gates K."/>
            <person name="Steiner S."/>
            <person name="Mohr C."/>
            <person name="Poehlmann R."/>
            <person name="Luedi P."/>
            <person name="Choi S."/>
            <person name="Wing R.A."/>
            <person name="Flavier A."/>
            <person name="Gaffney T.D."/>
            <person name="Philippsen P."/>
        </authorList>
    </citation>
    <scope>NUCLEOTIDE SEQUENCE [LARGE SCALE GENOMIC DNA]</scope>
    <source>
        <strain>ATCC 10895 / CBS 109.51 / FGSC 9923 / NRRL Y-1056</strain>
    </source>
</reference>
<reference key="2">
    <citation type="journal article" date="2013" name="G3 (Bethesda)">
        <title>Genomes of Ashbya fungi isolated from insects reveal four mating-type loci, numerous translocations, lack of transposons, and distinct gene duplications.</title>
        <authorList>
            <person name="Dietrich F.S."/>
            <person name="Voegeli S."/>
            <person name="Kuo S."/>
            <person name="Philippsen P."/>
        </authorList>
    </citation>
    <scope>GENOME REANNOTATION</scope>
    <source>
        <strain>ATCC 10895 / CBS 109.51 / FGSC 9923 / NRRL Y-1056</strain>
    </source>
</reference>
<evidence type="ECO:0000250" key="1"/>
<evidence type="ECO:0000256" key="2">
    <source>
        <dbReference type="SAM" id="MobiDB-lite"/>
    </source>
</evidence>
<evidence type="ECO:0000305" key="3"/>
<gene>
    <name type="primary">CHZ1</name>
    <name type="ordered locus">AER433W</name>
</gene>
<name>CHZ1_EREGS</name>
<proteinExistence type="inferred from homology"/>
<protein>
    <recommendedName>
        <fullName>Histone H2A.Z-specific chaperone CHZ1</fullName>
    </recommendedName>
</protein>
<comment type="function">
    <text evidence="1">Forms a chaperone-bound H2A.Z-H2B complex that acts as a source for SWR1 complex-dependent H2A to H2A.Z histone replacement in chromatin.</text>
</comment>
<comment type="subunit">
    <text evidence="1">Forms a heterotrimer with H2A.Z-H2B, stabilizing the association of the histone dimer. Also, with a lower affinity, forms a heterotrimer with H2A-H2B (By similarity).</text>
</comment>
<comment type="subcellular location">
    <subcellularLocation>
        <location evidence="1">Nucleus</location>
    </subcellularLocation>
</comment>
<comment type="similarity">
    <text evidence="3">Belongs to the CHZ1 family.</text>
</comment>
<accession>Q755T5</accession>
<dbReference type="EMBL" id="AE016818">
    <property type="protein sequence ID" value="AAS53112.1"/>
    <property type="molecule type" value="Genomic_DNA"/>
</dbReference>
<dbReference type="RefSeq" id="NP_985288.1">
    <property type="nucleotide sequence ID" value="NM_210642.1"/>
</dbReference>
<dbReference type="SMR" id="Q755T5"/>
<dbReference type="FunCoup" id="Q755T5">
    <property type="interactions" value="47"/>
</dbReference>
<dbReference type="STRING" id="284811.Q755T5"/>
<dbReference type="EnsemblFungi" id="AAS53112">
    <property type="protein sequence ID" value="AAS53112"/>
    <property type="gene ID" value="AGOS_AER433W"/>
</dbReference>
<dbReference type="GeneID" id="4621508"/>
<dbReference type="KEGG" id="ago:AGOS_AER433W"/>
<dbReference type="eggNOG" id="ENOG502SCUM">
    <property type="taxonomic scope" value="Eukaryota"/>
</dbReference>
<dbReference type="HOGENOM" id="CLU_126134_1_0_1"/>
<dbReference type="InParanoid" id="Q755T5"/>
<dbReference type="OMA" id="RTHYDDE"/>
<dbReference type="Proteomes" id="UP000000591">
    <property type="component" value="Chromosome V"/>
</dbReference>
<dbReference type="GO" id="GO:0005634">
    <property type="term" value="C:nucleus"/>
    <property type="evidence" value="ECO:0007669"/>
    <property type="project" value="UniProtKB-SubCell"/>
</dbReference>
<dbReference type="GO" id="GO:0042393">
    <property type="term" value="F:histone binding"/>
    <property type="evidence" value="ECO:0007669"/>
    <property type="project" value="EnsemblFungi"/>
</dbReference>
<dbReference type="GO" id="GO:0006338">
    <property type="term" value="P:chromatin remodeling"/>
    <property type="evidence" value="ECO:0007669"/>
    <property type="project" value="EnsemblFungi"/>
</dbReference>
<dbReference type="InterPro" id="IPR019098">
    <property type="entry name" value="Histone_chaperone_domain_CHZ"/>
</dbReference>
<dbReference type="Pfam" id="PF09649">
    <property type="entry name" value="CHZ"/>
    <property type="match status" value="1"/>
</dbReference>
<dbReference type="SMART" id="SM01082">
    <property type="entry name" value="CHZ"/>
    <property type="match status" value="1"/>
</dbReference>
<organism>
    <name type="scientific">Eremothecium gossypii (strain ATCC 10895 / CBS 109.51 / FGSC 9923 / NRRL Y-1056)</name>
    <name type="common">Yeast</name>
    <name type="synonym">Ashbya gossypii</name>
    <dbReference type="NCBI Taxonomy" id="284811"/>
    <lineage>
        <taxon>Eukaryota</taxon>
        <taxon>Fungi</taxon>
        <taxon>Dikarya</taxon>
        <taxon>Ascomycota</taxon>
        <taxon>Saccharomycotina</taxon>
        <taxon>Saccharomycetes</taxon>
        <taxon>Saccharomycetales</taxon>
        <taxon>Saccharomycetaceae</taxon>
        <taxon>Eremothecium</taxon>
    </lineage>
</organism>
<feature type="chain" id="PRO_0000330198" description="Histone H2A.Z-specific chaperone CHZ1">
    <location>
        <begin position="1"/>
        <end position="140"/>
    </location>
</feature>
<feature type="region of interest" description="Disordered" evidence="2">
    <location>
        <begin position="1"/>
        <end position="73"/>
    </location>
</feature>
<feature type="region of interest" description="Disordered" evidence="2">
    <location>
        <begin position="118"/>
        <end position="140"/>
    </location>
</feature>
<feature type="compositionally biased region" description="Basic and acidic residues" evidence="2">
    <location>
        <begin position="1"/>
        <end position="28"/>
    </location>
</feature>
<feature type="compositionally biased region" description="Basic and acidic residues" evidence="2">
    <location>
        <begin position="37"/>
        <end position="51"/>
    </location>
</feature>
<feature type="compositionally biased region" description="Acidic residues" evidence="2">
    <location>
        <begin position="61"/>
        <end position="72"/>
    </location>
</feature>
<feature type="compositionally biased region" description="Acidic residues" evidence="2">
    <location>
        <begin position="125"/>
        <end position="140"/>
    </location>
</feature>
<keyword id="KW-0143">Chaperone</keyword>
<keyword id="KW-0539">Nucleus</keyword>
<keyword id="KW-1185">Reference proteome</keyword>
<sequence length="140" mass="15084">MAEKAAEKAEQRAADEAEKRPVEDGEKHSGRKRRRRNYDEHDEAVAKDDAQSAKAGAAADSDADDSDADDEKLEVLMAREEEDEDDLAEIDASNIISGGRRTRGKVIDYKQTAEELAAEGAAAGVDDDAEDADADFDGEG</sequence>